<keyword id="KW-1185">Reference proteome</keyword>
<reference key="1">
    <citation type="journal article" date="2005" name="Nature">
        <title>The genome of the social amoeba Dictyostelium discoideum.</title>
        <authorList>
            <person name="Eichinger L."/>
            <person name="Pachebat J.A."/>
            <person name="Gloeckner G."/>
            <person name="Rajandream M.A."/>
            <person name="Sucgang R."/>
            <person name="Berriman M."/>
            <person name="Song J."/>
            <person name="Olsen R."/>
            <person name="Szafranski K."/>
            <person name="Xu Q."/>
            <person name="Tunggal B."/>
            <person name="Kummerfeld S."/>
            <person name="Madera M."/>
            <person name="Konfortov B.A."/>
            <person name="Rivero F."/>
            <person name="Bankier A.T."/>
            <person name="Lehmann R."/>
            <person name="Hamlin N."/>
            <person name="Davies R."/>
            <person name="Gaudet P."/>
            <person name="Fey P."/>
            <person name="Pilcher K."/>
            <person name="Chen G."/>
            <person name="Saunders D."/>
            <person name="Sodergren E.J."/>
            <person name="Davis P."/>
            <person name="Kerhornou A."/>
            <person name="Nie X."/>
            <person name="Hall N."/>
            <person name="Anjard C."/>
            <person name="Hemphill L."/>
            <person name="Bason N."/>
            <person name="Farbrother P."/>
            <person name="Desany B."/>
            <person name="Just E."/>
            <person name="Morio T."/>
            <person name="Rost R."/>
            <person name="Churcher C.M."/>
            <person name="Cooper J."/>
            <person name="Haydock S."/>
            <person name="van Driessche N."/>
            <person name="Cronin A."/>
            <person name="Goodhead I."/>
            <person name="Muzny D.M."/>
            <person name="Mourier T."/>
            <person name="Pain A."/>
            <person name="Lu M."/>
            <person name="Harper D."/>
            <person name="Lindsay R."/>
            <person name="Hauser H."/>
            <person name="James K.D."/>
            <person name="Quiles M."/>
            <person name="Madan Babu M."/>
            <person name="Saito T."/>
            <person name="Buchrieser C."/>
            <person name="Wardroper A."/>
            <person name="Felder M."/>
            <person name="Thangavelu M."/>
            <person name="Johnson D."/>
            <person name="Knights A."/>
            <person name="Loulseged H."/>
            <person name="Mungall K.L."/>
            <person name="Oliver K."/>
            <person name="Price C."/>
            <person name="Quail M.A."/>
            <person name="Urushihara H."/>
            <person name="Hernandez J."/>
            <person name="Rabbinowitsch E."/>
            <person name="Steffen D."/>
            <person name="Sanders M."/>
            <person name="Ma J."/>
            <person name="Kohara Y."/>
            <person name="Sharp S."/>
            <person name="Simmonds M.N."/>
            <person name="Spiegler S."/>
            <person name="Tivey A."/>
            <person name="Sugano S."/>
            <person name="White B."/>
            <person name="Walker D."/>
            <person name="Woodward J.R."/>
            <person name="Winckler T."/>
            <person name="Tanaka Y."/>
            <person name="Shaulsky G."/>
            <person name="Schleicher M."/>
            <person name="Weinstock G.M."/>
            <person name="Rosenthal A."/>
            <person name="Cox E.C."/>
            <person name="Chisholm R.L."/>
            <person name="Gibbs R.A."/>
            <person name="Loomis W.F."/>
            <person name="Platzer M."/>
            <person name="Kay R.R."/>
            <person name="Williams J.G."/>
            <person name="Dear P.H."/>
            <person name="Noegel A.A."/>
            <person name="Barrell B.G."/>
            <person name="Kuspa A."/>
        </authorList>
    </citation>
    <scope>NUCLEOTIDE SEQUENCE [LARGE SCALE GENOMIC DNA]</scope>
    <source>
        <strain>AX4</strain>
    </source>
</reference>
<organism>
    <name type="scientific">Dictyostelium discoideum</name>
    <name type="common">Social amoeba</name>
    <dbReference type="NCBI Taxonomy" id="44689"/>
    <lineage>
        <taxon>Eukaryota</taxon>
        <taxon>Amoebozoa</taxon>
        <taxon>Evosea</taxon>
        <taxon>Eumycetozoa</taxon>
        <taxon>Dictyostelia</taxon>
        <taxon>Dictyosteliales</taxon>
        <taxon>Dictyosteliaceae</taxon>
        <taxon>Dictyostelium</taxon>
    </lineage>
</organism>
<evidence type="ECO:0000305" key="1"/>
<dbReference type="EMBL" id="AAFI02000047">
    <property type="protein sequence ID" value="EAL66187.1"/>
    <property type="molecule type" value="Genomic_DNA"/>
</dbReference>
<dbReference type="RefSeq" id="XP_640179.1">
    <property type="nucleotide sequence ID" value="XM_635087.1"/>
</dbReference>
<dbReference type="SMR" id="Q54S60"/>
<dbReference type="FunCoup" id="Q54S60">
    <property type="interactions" value="79"/>
</dbReference>
<dbReference type="STRING" id="44689.Q54S60"/>
<dbReference type="PaxDb" id="44689-DDB0305030"/>
<dbReference type="EnsemblProtists" id="EAL66187">
    <property type="protein sequence ID" value="EAL66187"/>
    <property type="gene ID" value="DDB_G0282655"/>
</dbReference>
<dbReference type="GeneID" id="8623718"/>
<dbReference type="KEGG" id="ddi:DDB_G0282655"/>
<dbReference type="dictyBase" id="DDB_G0282655"/>
<dbReference type="VEuPathDB" id="AmoebaDB:DDB_G0282655"/>
<dbReference type="eggNOG" id="ENOG502RIE9">
    <property type="taxonomic scope" value="Eukaryota"/>
</dbReference>
<dbReference type="HOGENOM" id="CLU_1573538_0_0_1"/>
<dbReference type="InParanoid" id="Q54S60"/>
<dbReference type="OMA" id="WIIKANN"/>
<dbReference type="PhylomeDB" id="Q54S60"/>
<dbReference type="PRO" id="PR:Q54S60"/>
<dbReference type="Proteomes" id="UP000002195">
    <property type="component" value="Chromosome 3"/>
</dbReference>
<dbReference type="GO" id="GO:0005634">
    <property type="term" value="C:nucleus"/>
    <property type="evidence" value="ECO:0000318"/>
    <property type="project" value="GO_Central"/>
</dbReference>
<dbReference type="Gene3D" id="1.20.1440.170">
    <property type="entry name" value="Translation machinery-associated protein 16-like"/>
    <property type="match status" value="1"/>
</dbReference>
<dbReference type="InterPro" id="IPR021346">
    <property type="entry name" value="Tma16"/>
</dbReference>
<dbReference type="InterPro" id="IPR038356">
    <property type="entry name" value="Tma16_sf"/>
</dbReference>
<dbReference type="PANTHER" id="PTHR13349">
    <property type="entry name" value="TRANSLATION MACHINERY-ASSOCIATED PROTEIN 16"/>
    <property type="match status" value="1"/>
</dbReference>
<dbReference type="PANTHER" id="PTHR13349:SF2">
    <property type="entry name" value="TRANSLATION MACHINERY-ASSOCIATED PROTEIN 16"/>
    <property type="match status" value="1"/>
</dbReference>
<dbReference type="Pfam" id="PF11176">
    <property type="entry name" value="Tma16"/>
    <property type="match status" value="1"/>
</dbReference>
<sequence length="170" mass="20135">MNKKDKKKAPQKVAKVLHPLSRKAKKLTLEGIRDIKKEKNANIRKKEQKPIKQLLDHFQEIVKKENKKIFTESEVSDIIDQFLKTKTPEEEIKQVTSRTNKLEFTKSQHNDEIKEFKNNGYSVPDLTNANYVRFLLNWDGDMKYITQQSLPLKKFKYIEQPKNEMETDSK</sequence>
<comment type="similarity">
    <text evidence="1">Belongs to the TMA16 family.</text>
</comment>
<name>TMA16_DICDI</name>
<protein>
    <recommendedName>
        <fullName>Translation machinery-associated protein 16 homolog</fullName>
    </recommendedName>
</protein>
<feature type="chain" id="PRO_0000328546" description="Translation machinery-associated protein 16 homolog">
    <location>
        <begin position="1"/>
        <end position="170"/>
    </location>
</feature>
<accession>Q54S60</accession>
<gene>
    <name type="ORF">DDB_G0282655</name>
</gene>
<proteinExistence type="inferred from homology"/>